<evidence type="ECO:0000255" key="1">
    <source>
        <dbReference type="HAMAP-Rule" id="MF_00009"/>
    </source>
</evidence>
<dbReference type="EC" id="3.1.-.-" evidence="1"/>
<dbReference type="EMBL" id="AE008692">
    <property type="protein sequence ID" value="AAV88698.1"/>
    <property type="molecule type" value="Genomic_DNA"/>
</dbReference>
<dbReference type="RefSeq" id="WP_011240048.1">
    <property type="nucleotide sequence ID" value="NZ_CP035711.1"/>
</dbReference>
<dbReference type="SMR" id="Q5NRF6"/>
<dbReference type="STRING" id="264203.ZMO0074"/>
<dbReference type="GeneID" id="79904672"/>
<dbReference type="KEGG" id="zmo:ZMO0074"/>
<dbReference type="eggNOG" id="COG0319">
    <property type="taxonomic scope" value="Bacteria"/>
</dbReference>
<dbReference type="HOGENOM" id="CLU_106710_0_0_5"/>
<dbReference type="Proteomes" id="UP000001173">
    <property type="component" value="Chromosome"/>
</dbReference>
<dbReference type="GO" id="GO:0005737">
    <property type="term" value="C:cytoplasm"/>
    <property type="evidence" value="ECO:0007669"/>
    <property type="project" value="UniProtKB-SubCell"/>
</dbReference>
<dbReference type="GO" id="GO:0004222">
    <property type="term" value="F:metalloendopeptidase activity"/>
    <property type="evidence" value="ECO:0007669"/>
    <property type="project" value="InterPro"/>
</dbReference>
<dbReference type="GO" id="GO:0004521">
    <property type="term" value="F:RNA endonuclease activity"/>
    <property type="evidence" value="ECO:0007669"/>
    <property type="project" value="UniProtKB-UniRule"/>
</dbReference>
<dbReference type="GO" id="GO:0008270">
    <property type="term" value="F:zinc ion binding"/>
    <property type="evidence" value="ECO:0007669"/>
    <property type="project" value="UniProtKB-UniRule"/>
</dbReference>
<dbReference type="GO" id="GO:0006364">
    <property type="term" value="P:rRNA processing"/>
    <property type="evidence" value="ECO:0007669"/>
    <property type="project" value="UniProtKB-UniRule"/>
</dbReference>
<dbReference type="Gene3D" id="3.40.390.30">
    <property type="entry name" value="Metalloproteases ('zincins'), catalytic domain"/>
    <property type="match status" value="1"/>
</dbReference>
<dbReference type="HAMAP" id="MF_00009">
    <property type="entry name" value="Endoribonucl_YbeY"/>
    <property type="match status" value="1"/>
</dbReference>
<dbReference type="InterPro" id="IPR023091">
    <property type="entry name" value="MetalPrtase_cat_dom_sf_prd"/>
</dbReference>
<dbReference type="InterPro" id="IPR002036">
    <property type="entry name" value="YbeY"/>
</dbReference>
<dbReference type="InterPro" id="IPR020549">
    <property type="entry name" value="YbeY_CS"/>
</dbReference>
<dbReference type="NCBIfam" id="TIGR00043">
    <property type="entry name" value="rRNA maturation RNase YbeY"/>
    <property type="match status" value="1"/>
</dbReference>
<dbReference type="PANTHER" id="PTHR46986">
    <property type="entry name" value="ENDORIBONUCLEASE YBEY, CHLOROPLASTIC"/>
    <property type="match status" value="1"/>
</dbReference>
<dbReference type="PANTHER" id="PTHR46986:SF1">
    <property type="entry name" value="ENDORIBONUCLEASE YBEY, CHLOROPLASTIC"/>
    <property type="match status" value="1"/>
</dbReference>
<dbReference type="Pfam" id="PF02130">
    <property type="entry name" value="YbeY"/>
    <property type="match status" value="1"/>
</dbReference>
<dbReference type="SUPFAM" id="SSF55486">
    <property type="entry name" value="Metalloproteases ('zincins'), catalytic domain"/>
    <property type="match status" value="1"/>
</dbReference>
<dbReference type="PROSITE" id="PS01306">
    <property type="entry name" value="UPF0054"/>
    <property type="match status" value="1"/>
</dbReference>
<accession>Q5NRF6</accession>
<comment type="function">
    <text evidence="1">Single strand-specific metallo-endoribonuclease involved in late-stage 70S ribosome quality control and in maturation of the 3' terminus of the 16S rRNA.</text>
</comment>
<comment type="cofactor">
    <cofactor evidence="1">
        <name>Zn(2+)</name>
        <dbReference type="ChEBI" id="CHEBI:29105"/>
    </cofactor>
    <text evidence="1">Binds 1 zinc ion.</text>
</comment>
<comment type="subcellular location">
    <subcellularLocation>
        <location evidence="1">Cytoplasm</location>
    </subcellularLocation>
</comment>
<comment type="similarity">
    <text evidence="1">Belongs to the endoribonuclease YbeY family.</text>
</comment>
<proteinExistence type="inferred from homology"/>
<gene>
    <name evidence="1" type="primary">ybeY</name>
    <name type="ordered locus">ZMO0074</name>
</gene>
<name>YBEY_ZYMMO</name>
<reference key="1">
    <citation type="journal article" date="2005" name="Nat. Biotechnol.">
        <title>The genome sequence of the ethanologenic bacterium Zymomonas mobilis ZM4.</title>
        <authorList>
            <person name="Seo J.-S."/>
            <person name="Chong H."/>
            <person name="Park H.S."/>
            <person name="Yoon K.-O."/>
            <person name="Jung C."/>
            <person name="Kim J.J."/>
            <person name="Hong J.H."/>
            <person name="Kim H."/>
            <person name="Kim J.-H."/>
            <person name="Kil J.-I."/>
            <person name="Park C.J."/>
            <person name="Oh H.-M."/>
            <person name="Lee J.-S."/>
            <person name="Jin S.-J."/>
            <person name="Um H.-W."/>
            <person name="Lee H.-J."/>
            <person name="Oh S.-J."/>
            <person name="Kim J.Y."/>
            <person name="Kang H.L."/>
            <person name="Lee S.Y."/>
            <person name="Lee K.J."/>
            <person name="Kang H.S."/>
        </authorList>
    </citation>
    <scope>NUCLEOTIDE SEQUENCE [LARGE SCALE GENOMIC DNA]</scope>
    <source>
        <strain>ATCC 31821 / ZM4 / CP4</strain>
    </source>
</reference>
<organism>
    <name type="scientific">Zymomonas mobilis subsp. mobilis (strain ATCC 31821 / ZM4 / CP4)</name>
    <dbReference type="NCBI Taxonomy" id="264203"/>
    <lineage>
        <taxon>Bacteria</taxon>
        <taxon>Pseudomonadati</taxon>
        <taxon>Pseudomonadota</taxon>
        <taxon>Alphaproteobacteria</taxon>
        <taxon>Sphingomonadales</taxon>
        <taxon>Zymomonadaceae</taxon>
        <taxon>Zymomonas</taxon>
    </lineage>
</organism>
<sequence>MITVEADISDLWPEQSNWEALAQTACQQAVSVSASDFLLAKDYETEISVCFSDNDTVHALNKTWRDKDRPTNVLSFPMMEAEELAEIKNRVGSECLLGDIILAFDVAKKEALEKGISLENHVTHLITHGTLHLLGYDHILDNEAEIMEDLERKALAQLDIPDPYSDHETGKEGLDG</sequence>
<protein>
    <recommendedName>
        <fullName evidence="1">Endoribonuclease YbeY</fullName>
        <ecNumber evidence="1">3.1.-.-</ecNumber>
    </recommendedName>
</protein>
<feature type="chain" id="PRO_0000102577" description="Endoribonuclease YbeY">
    <location>
        <begin position="1"/>
        <end position="176"/>
    </location>
</feature>
<feature type="binding site" evidence="1">
    <location>
        <position position="128"/>
    </location>
    <ligand>
        <name>Zn(2+)</name>
        <dbReference type="ChEBI" id="CHEBI:29105"/>
        <note>catalytic</note>
    </ligand>
</feature>
<feature type="binding site" evidence="1">
    <location>
        <position position="132"/>
    </location>
    <ligand>
        <name>Zn(2+)</name>
        <dbReference type="ChEBI" id="CHEBI:29105"/>
        <note>catalytic</note>
    </ligand>
</feature>
<feature type="binding site" evidence="1">
    <location>
        <position position="138"/>
    </location>
    <ligand>
        <name>Zn(2+)</name>
        <dbReference type="ChEBI" id="CHEBI:29105"/>
        <note>catalytic</note>
    </ligand>
</feature>
<keyword id="KW-0963">Cytoplasm</keyword>
<keyword id="KW-0255">Endonuclease</keyword>
<keyword id="KW-0378">Hydrolase</keyword>
<keyword id="KW-0479">Metal-binding</keyword>
<keyword id="KW-0540">Nuclease</keyword>
<keyword id="KW-1185">Reference proteome</keyword>
<keyword id="KW-0690">Ribosome biogenesis</keyword>
<keyword id="KW-0698">rRNA processing</keyword>
<keyword id="KW-0862">Zinc</keyword>